<protein>
    <recommendedName>
        <fullName evidence="1">C4-dicarboxylate transport protein</fullName>
    </recommendedName>
</protein>
<proteinExistence type="inferred from homology"/>
<gene>
    <name evidence="1" type="primary">dctA</name>
    <name type="ordered locus">Dtpsy_0027</name>
</gene>
<organism>
    <name type="scientific">Acidovorax ebreus (strain TPSY)</name>
    <name type="common">Diaphorobacter sp. (strain TPSY)</name>
    <dbReference type="NCBI Taxonomy" id="535289"/>
    <lineage>
        <taxon>Bacteria</taxon>
        <taxon>Pseudomonadati</taxon>
        <taxon>Pseudomonadota</taxon>
        <taxon>Betaproteobacteria</taxon>
        <taxon>Burkholderiales</taxon>
        <taxon>Comamonadaceae</taxon>
        <taxon>Diaphorobacter</taxon>
    </lineage>
</organism>
<accession>B9M9U5</accession>
<name>DCTA_ACIET</name>
<dbReference type="EMBL" id="CP001392">
    <property type="protein sequence ID" value="ACM31516.1"/>
    <property type="molecule type" value="Genomic_DNA"/>
</dbReference>
<dbReference type="RefSeq" id="WP_012655145.1">
    <property type="nucleotide sequence ID" value="NC_011992.1"/>
</dbReference>
<dbReference type="SMR" id="B9M9U5"/>
<dbReference type="KEGG" id="dia:Dtpsy_0027"/>
<dbReference type="eggNOG" id="COG1301">
    <property type="taxonomic scope" value="Bacteria"/>
</dbReference>
<dbReference type="HOGENOM" id="CLU_019375_7_0_4"/>
<dbReference type="Proteomes" id="UP000000450">
    <property type="component" value="Chromosome"/>
</dbReference>
<dbReference type="GO" id="GO:0005886">
    <property type="term" value="C:plasma membrane"/>
    <property type="evidence" value="ECO:0007669"/>
    <property type="project" value="UniProtKB-SubCell"/>
</dbReference>
<dbReference type="GO" id="GO:0015138">
    <property type="term" value="F:fumarate transmembrane transporter activity"/>
    <property type="evidence" value="ECO:0007669"/>
    <property type="project" value="TreeGrafter"/>
</dbReference>
<dbReference type="GO" id="GO:0015366">
    <property type="term" value="F:malate:proton symporter activity"/>
    <property type="evidence" value="ECO:0007669"/>
    <property type="project" value="TreeGrafter"/>
</dbReference>
<dbReference type="GO" id="GO:0015141">
    <property type="term" value="F:succinate transmembrane transporter activity"/>
    <property type="evidence" value="ECO:0007669"/>
    <property type="project" value="TreeGrafter"/>
</dbReference>
<dbReference type="GO" id="GO:0070778">
    <property type="term" value="P:L-aspartate transmembrane transport"/>
    <property type="evidence" value="ECO:0007669"/>
    <property type="project" value="TreeGrafter"/>
</dbReference>
<dbReference type="FunFam" id="1.10.3860.10:FF:000001">
    <property type="entry name" value="C4-dicarboxylate transport protein"/>
    <property type="match status" value="1"/>
</dbReference>
<dbReference type="Gene3D" id="1.10.3860.10">
    <property type="entry name" value="Sodium:dicarboxylate symporter"/>
    <property type="match status" value="1"/>
</dbReference>
<dbReference type="HAMAP" id="MF_01300">
    <property type="entry name" value="C4_dicarb_transport"/>
    <property type="match status" value="1"/>
</dbReference>
<dbReference type="InterPro" id="IPR023954">
    <property type="entry name" value="C4_dicarb_transport"/>
</dbReference>
<dbReference type="InterPro" id="IPR001991">
    <property type="entry name" value="Na-dicarboxylate_symporter"/>
</dbReference>
<dbReference type="InterPro" id="IPR018107">
    <property type="entry name" value="Na-dicarboxylate_symporter_CS"/>
</dbReference>
<dbReference type="InterPro" id="IPR036458">
    <property type="entry name" value="Na:dicarbo_symporter_sf"/>
</dbReference>
<dbReference type="NCBIfam" id="NF002461">
    <property type="entry name" value="PRK01663.1"/>
    <property type="match status" value="1"/>
</dbReference>
<dbReference type="NCBIfam" id="NF009587">
    <property type="entry name" value="PRK13027.1"/>
    <property type="match status" value="1"/>
</dbReference>
<dbReference type="PANTHER" id="PTHR42865:SF1">
    <property type="entry name" value="AEROBIC C4-DICARBOXYLATE TRANSPORT PROTEIN"/>
    <property type="match status" value="1"/>
</dbReference>
<dbReference type="PANTHER" id="PTHR42865">
    <property type="entry name" value="PROTON/GLUTAMATE-ASPARTATE SYMPORTER"/>
    <property type="match status" value="1"/>
</dbReference>
<dbReference type="Pfam" id="PF00375">
    <property type="entry name" value="SDF"/>
    <property type="match status" value="1"/>
</dbReference>
<dbReference type="PRINTS" id="PR00173">
    <property type="entry name" value="EDTRNSPORT"/>
</dbReference>
<dbReference type="SUPFAM" id="SSF118215">
    <property type="entry name" value="Proton glutamate symport protein"/>
    <property type="match status" value="1"/>
</dbReference>
<dbReference type="PROSITE" id="PS00713">
    <property type="entry name" value="NA_DICARBOXYL_SYMP_1"/>
    <property type="match status" value="1"/>
</dbReference>
<dbReference type="PROSITE" id="PS00714">
    <property type="entry name" value="NA_DICARBOXYL_SYMP_2"/>
    <property type="match status" value="1"/>
</dbReference>
<comment type="function">
    <text evidence="1">Responsible for the transport of dicarboxylates such as succinate, fumarate, and malate from the periplasm across the membrane.</text>
</comment>
<comment type="subcellular location">
    <subcellularLocation>
        <location evidence="1">Cell inner membrane</location>
        <topology evidence="1">Multi-pass membrane protein</topology>
    </subcellularLocation>
</comment>
<comment type="similarity">
    <text evidence="1">Belongs to the dicarboxylate/amino acid:cation symporter (DAACS) (TC 2.A.23) family.</text>
</comment>
<sequence length="450" mass="47571">MHAISSAAPAPSVRLPFYRQLYFQVVFAIIIGVLLGHFQPEYGAAMKPFGDAFIKLIKMIIAPVIFLTIVTGIASMSHLSAVGRVFGKAMAYFLTFSTLALVVGLVVANVMQPGTGMHINVAELDQTAVKGYVSKSHEMTLTGFALDIIPKTLISPFVGDNILQVLLVAVLFGVSLAMVGDAGKPILDFLDGLTKPVFKLVNIVMKAAPIGAFGAMAFTIGKFGLGSLVNLAELVLTFYITSAVFVLVVLGAVARACGFSVLKLIRYLKAELLLVLGTSSSESALPSLMEKMEKAGCSKSVVGLVVPTGYSFNLDGTNIYMTLAALFIAQATDTHLTLGHQIALLLVAMLSSKGAAGVTGAGFITLAATLAVVPEVPVAGMALILGVDRFMSECRSLTNFIGNAVATVVVSRWENALDADRLHRVLDGEAEFLPEPERAVEPVVLARHRA</sequence>
<feature type="chain" id="PRO_1000165285" description="C4-dicarboxylate transport protein">
    <location>
        <begin position="1"/>
        <end position="450"/>
    </location>
</feature>
<feature type="transmembrane region" description="Helical" evidence="1">
    <location>
        <begin position="25"/>
        <end position="45"/>
    </location>
</feature>
<feature type="transmembrane region" description="Helical" evidence="1">
    <location>
        <begin position="56"/>
        <end position="76"/>
    </location>
</feature>
<feature type="transmembrane region" description="Helical" evidence="1">
    <location>
        <begin position="90"/>
        <end position="110"/>
    </location>
</feature>
<feature type="transmembrane region" description="Helical" evidence="1">
    <location>
        <begin position="162"/>
        <end position="182"/>
    </location>
</feature>
<feature type="transmembrane region" description="Helical" evidence="1">
    <location>
        <begin position="200"/>
        <end position="220"/>
    </location>
</feature>
<feature type="transmembrane region" description="Helical" evidence="1">
    <location>
        <begin position="234"/>
        <end position="254"/>
    </location>
</feature>
<feature type="transmembrane region" description="Helical" evidence="1">
    <location>
        <begin position="319"/>
        <end position="339"/>
    </location>
</feature>
<feature type="transmembrane region" description="Helical" evidence="1">
    <location>
        <begin position="367"/>
        <end position="387"/>
    </location>
</feature>
<keyword id="KW-0997">Cell inner membrane</keyword>
<keyword id="KW-1003">Cell membrane</keyword>
<keyword id="KW-0472">Membrane</keyword>
<keyword id="KW-1185">Reference proteome</keyword>
<keyword id="KW-0769">Symport</keyword>
<keyword id="KW-0812">Transmembrane</keyword>
<keyword id="KW-1133">Transmembrane helix</keyword>
<keyword id="KW-0813">Transport</keyword>
<evidence type="ECO:0000255" key="1">
    <source>
        <dbReference type="HAMAP-Rule" id="MF_01300"/>
    </source>
</evidence>
<reference key="1">
    <citation type="submission" date="2009-01" db="EMBL/GenBank/DDBJ databases">
        <title>Complete sequence of Diaphorobacter sp. TPSY.</title>
        <authorList>
            <consortium name="US DOE Joint Genome Institute"/>
            <person name="Lucas S."/>
            <person name="Copeland A."/>
            <person name="Lapidus A."/>
            <person name="Glavina del Rio T."/>
            <person name="Tice H."/>
            <person name="Bruce D."/>
            <person name="Goodwin L."/>
            <person name="Pitluck S."/>
            <person name="Chertkov O."/>
            <person name="Brettin T."/>
            <person name="Detter J.C."/>
            <person name="Han C."/>
            <person name="Larimer F."/>
            <person name="Land M."/>
            <person name="Hauser L."/>
            <person name="Kyrpides N."/>
            <person name="Mikhailova N."/>
            <person name="Coates J.D."/>
        </authorList>
    </citation>
    <scope>NUCLEOTIDE SEQUENCE [LARGE SCALE GENOMIC DNA]</scope>
    <source>
        <strain>TPSY</strain>
    </source>
</reference>